<keyword id="KW-0456">Lyase</keyword>
<keyword id="KW-0501">Molybdenum cofactor biosynthesis</keyword>
<keyword id="KW-1185">Reference proteome</keyword>
<evidence type="ECO:0000255" key="1">
    <source>
        <dbReference type="HAMAP-Rule" id="MF_01224"/>
    </source>
</evidence>
<name>MOAC_CROS8</name>
<reference key="1">
    <citation type="journal article" date="2010" name="PLoS ONE">
        <title>Genome sequence of Cronobacter sakazakii BAA-894 and comparative genomic hybridization analysis with other Cronobacter species.</title>
        <authorList>
            <person name="Kucerova E."/>
            <person name="Clifton S.W."/>
            <person name="Xia X.Q."/>
            <person name="Long F."/>
            <person name="Porwollik S."/>
            <person name="Fulton L."/>
            <person name="Fronick C."/>
            <person name="Minx P."/>
            <person name="Kyung K."/>
            <person name="Warren W."/>
            <person name="Fulton R."/>
            <person name="Feng D."/>
            <person name="Wollam A."/>
            <person name="Shah N."/>
            <person name="Bhonagiri V."/>
            <person name="Nash W.E."/>
            <person name="Hallsworth-Pepin K."/>
            <person name="Wilson R.K."/>
            <person name="McClelland M."/>
            <person name="Forsythe S.J."/>
        </authorList>
    </citation>
    <scope>NUCLEOTIDE SEQUENCE [LARGE SCALE GENOMIC DNA]</scope>
    <source>
        <strain>ATCC BAA-894</strain>
    </source>
</reference>
<protein>
    <recommendedName>
        <fullName evidence="1">Cyclic pyranopterin monophosphate synthase</fullName>
        <ecNumber evidence="1">4.6.1.17</ecNumber>
    </recommendedName>
    <alternativeName>
        <fullName evidence="1">Molybdenum cofactor biosynthesis protein C</fullName>
    </alternativeName>
</protein>
<gene>
    <name evidence="1" type="primary">moaC</name>
    <name type="ordered locus">ESA_02561</name>
</gene>
<comment type="function">
    <text evidence="1">Catalyzes the conversion of (8S)-3',8-cyclo-7,8-dihydroguanosine 5'-triphosphate to cyclic pyranopterin monophosphate (cPMP).</text>
</comment>
<comment type="catalytic activity">
    <reaction evidence="1">
        <text>(8S)-3',8-cyclo-7,8-dihydroguanosine 5'-triphosphate = cyclic pyranopterin phosphate + diphosphate</text>
        <dbReference type="Rhea" id="RHEA:49580"/>
        <dbReference type="ChEBI" id="CHEBI:33019"/>
        <dbReference type="ChEBI" id="CHEBI:59648"/>
        <dbReference type="ChEBI" id="CHEBI:131766"/>
        <dbReference type="EC" id="4.6.1.17"/>
    </reaction>
</comment>
<comment type="pathway">
    <text evidence="1">Cofactor biosynthesis; molybdopterin biosynthesis.</text>
</comment>
<comment type="subunit">
    <text evidence="1">Homohexamer; trimer of dimers.</text>
</comment>
<comment type="similarity">
    <text evidence="1">Belongs to the MoaC family.</text>
</comment>
<sequence length="161" mass="17371">MSQLTHINAAGEAHMVDVSGKAETVREARAEAFVEMRPETLSMIVSGSHHKGDVFATARIAGIQAAKRTWELIPLCHPLLLSKVEVQLFADEARSRVRIESLCRLTGKTGVEMEALTAASVAALTIYDMCKAVQKDMVIGPVRLLAKSGGKSGDFQVDAHD</sequence>
<accession>A7MJ08</accession>
<dbReference type="EC" id="4.6.1.17" evidence="1"/>
<dbReference type="EMBL" id="CP000783">
    <property type="protein sequence ID" value="ABU77806.1"/>
    <property type="molecule type" value="Genomic_DNA"/>
</dbReference>
<dbReference type="RefSeq" id="WP_004387504.1">
    <property type="nucleotide sequence ID" value="NC_009778.1"/>
</dbReference>
<dbReference type="SMR" id="A7MJ08"/>
<dbReference type="GeneID" id="56731362"/>
<dbReference type="KEGG" id="esa:ESA_02561"/>
<dbReference type="HOGENOM" id="CLU_074693_1_1_6"/>
<dbReference type="UniPathway" id="UPA00344"/>
<dbReference type="Proteomes" id="UP000000260">
    <property type="component" value="Chromosome"/>
</dbReference>
<dbReference type="GO" id="GO:0061799">
    <property type="term" value="F:cyclic pyranopterin monophosphate synthase activity"/>
    <property type="evidence" value="ECO:0007669"/>
    <property type="project" value="UniProtKB-UniRule"/>
</dbReference>
<dbReference type="GO" id="GO:0006777">
    <property type="term" value="P:Mo-molybdopterin cofactor biosynthetic process"/>
    <property type="evidence" value="ECO:0007669"/>
    <property type="project" value="UniProtKB-UniRule"/>
</dbReference>
<dbReference type="CDD" id="cd01420">
    <property type="entry name" value="MoaC_PE"/>
    <property type="match status" value="1"/>
</dbReference>
<dbReference type="FunFam" id="3.30.70.640:FF:000001">
    <property type="entry name" value="Cyclic pyranopterin monophosphate synthase"/>
    <property type="match status" value="1"/>
</dbReference>
<dbReference type="Gene3D" id="3.30.70.640">
    <property type="entry name" value="Molybdopterin cofactor biosynthesis C (MoaC) domain"/>
    <property type="match status" value="1"/>
</dbReference>
<dbReference type="HAMAP" id="MF_01224_B">
    <property type="entry name" value="MoaC_B"/>
    <property type="match status" value="1"/>
</dbReference>
<dbReference type="InterPro" id="IPR023045">
    <property type="entry name" value="MoaC"/>
</dbReference>
<dbReference type="InterPro" id="IPR047594">
    <property type="entry name" value="MoaC_bact/euk"/>
</dbReference>
<dbReference type="InterPro" id="IPR036522">
    <property type="entry name" value="MoaC_sf"/>
</dbReference>
<dbReference type="InterPro" id="IPR050105">
    <property type="entry name" value="MoCo_biosynth_MoaA/MoaC"/>
</dbReference>
<dbReference type="InterPro" id="IPR002820">
    <property type="entry name" value="Mopterin_CF_biosynth-C_dom"/>
</dbReference>
<dbReference type="NCBIfam" id="TIGR00581">
    <property type="entry name" value="moaC"/>
    <property type="match status" value="1"/>
</dbReference>
<dbReference type="NCBIfam" id="NF006870">
    <property type="entry name" value="PRK09364.1"/>
    <property type="match status" value="1"/>
</dbReference>
<dbReference type="PANTHER" id="PTHR22960">
    <property type="entry name" value="MOLYBDOPTERIN COFACTOR SYNTHESIS PROTEIN A"/>
    <property type="match status" value="1"/>
</dbReference>
<dbReference type="Pfam" id="PF01967">
    <property type="entry name" value="MoaC"/>
    <property type="match status" value="1"/>
</dbReference>
<dbReference type="SUPFAM" id="SSF55040">
    <property type="entry name" value="Molybdenum cofactor biosynthesis protein C, MoaC"/>
    <property type="match status" value="1"/>
</dbReference>
<proteinExistence type="inferred from homology"/>
<feature type="chain" id="PRO_1000054094" description="Cyclic pyranopterin monophosphate synthase">
    <location>
        <begin position="1"/>
        <end position="161"/>
    </location>
</feature>
<feature type="active site" evidence="1">
    <location>
        <position position="128"/>
    </location>
</feature>
<feature type="binding site" evidence="1">
    <location>
        <begin position="75"/>
        <end position="77"/>
    </location>
    <ligand>
        <name>substrate</name>
    </ligand>
</feature>
<feature type="binding site" evidence="1">
    <location>
        <begin position="113"/>
        <end position="114"/>
    </location>
    <ligand>
        <name>substrate</name>
    </ligand>
</feature>
<organism>
    <name type="scientific">Cronobacter sakazakii (strain ATCC BAA-894)</name>
    <name type="common">Enterobacter sakazakii</name>
    <dbReference type="NCBI Taxonomy" id="290339"/>
    <lineage>
        <taxon>Bacteria</taxon>
        <taxon>Pseudomonadati</taxon>
        <taxon>Pseudomonadota</taxon>
        <taxon>Gammaproteobacteria</taxon>
        <taxon>Enterobacterales</taxon>
        <taxon>Enterobacteriaceae</taxon>
        <taxon>Cronobacter</taxon>
    </lineage>
</organism>